<organism>
    <name type="scientific">Staphylococcus aureus (strain NCTC 8325 / PS 47)</name>
    <dbReference type="NCBI Taxonomy" id="93061"/>
    <lineage>
        <taxon>Bacteria</taxon>
        <taxon>Bacillati</taxon>
        <taxon>Bacillota</taxon>
        <taxon>Bacilli</taxon>
        <taxon>Bacillales</taxon>
        <taxon>Staphylococcaceae</taxon>
        <taxon>Staphylococcus</taxon>
    </lineage>
</organism>
<accession>Q2FZU1</accession>
<dbReference type="EC" id="6.3.4.5" evidence="1"/>
<dbReference type="EMBL" id="CP000253">
    <property type="protein sequence ID" value="ABD30024.1"/>
    <property type="molecule type" value="Genomic_DNA"/>
</dbReference>
<dbReference type="RefSeq" id="WP_000660045.1">
    <property type="nucleotide sequence ID" value="NZ_LS483365.1"/>
</dbReference>
<dbReference type="RefSeq" id="YP_499452.1">
    <property type="nucleotide sequence ID" value="NC_007795.1"/>
</dbReference>
<dbReference type="SMR" id="Q2FZU1"/>
<dbReference type="STRING" id="93061.SAOUHSC_00899"/>
<dbReference type="PaxDb" id="1280-SAXN108_0956"/>
<dbReference type="GeneID" id="3921745"/>
<dbReference type="KEGG" id="sao:SAOUHSC_00899"/>
<dbReference type="PATRIC" id="fig|93061.5.peg.820"/>
<dbReference type="eggNOG" id="COG0137">
    <property type="taxonomic scope" value="Bacteria"/>
</dbReference>
<dbReference type="HOGENOM" id="CLU_032784_4_2_9"/>
<dbReference type="OrthoDB" id="9801641at2"/>
<dbReference type="UniPathway" id="UPA00068">
    <property type="reaction ID" value="UER00113"/>
</dbReference>
<dbReference type="PRO" id="PR:Q2FZU1"/>
<dbReference type="Proteomes" id="UP000008816">
    <property type="component" value="Chromosome"/>
</dbReference>
<dbReference type="GO" id="GO:0005737">
    <property type="term" value="C:cytoplasm"/>
    <property type="evidence" value="ECO:0000318"/>
    <property type="project" value="GO_Central"/>
</dbReference>
<dbReference type="GO" id="GO:0004055">
    <property type="term" value="F:argininosuccinate synthase activity"/>
    <property type="evidence" value="ECO:0000318"/>
    <property type="project" value="GO_Central"/>
</dbReference>
<dbReference type="GO" id="GO:0005524">
    <property type="term" value="F:ATP binding"/>
    <property type="evidence" value="ECO:0007669"/>
    <property type="project" value="UniProtKB-UniRule"/>
</dbReference>
<dbReference type="GO" id="GO:0000053">
    <property type="term" value="P:argininosuccinate metabolic process"/>
    <property type="evidence" value="ECO:0000318"/>
    <property type="project" value="GO_Central"/>
</dbReference>
<dbReference type="GO" id="GO:0006526">
    <property type="term" value="P:L-arginine biosynthetic process"/>
    <property type="evidence" value="ECO:0000318"/>
    <property type="project" value="GO_Central"/>
</dbReference>
<dbReference type="GO" id="GO:0000050">
    <property type="term" value="P:urea cycle"/>
    <property type="evidence" value="ECO:0000318"/>
    <property type="project" value="GO_Central"/>
</dbReference>
<dbReference type="CDD" id="cd01999">
    <property type="entry name" value="ASS"/>
    <property type="match status" value="1"/>
</dbReference>
<dbReference type="FunFam" id="1.20.5.470:FF:000002">
    <property type="entry name" value="Argininosuccinate synthase"/>
    <property type="match status" value="1"/>
</dbReference>
<dbReference type="FunFam" id="3.40.50.620:FF:000038">
    <property type="entry name" value="Argininosuccinate synthase"/>
    <property type="match status" value="1"/>
</dbReference>
<dbReference type="FunFam" id="3.90.1260.10:FF:000007">
    <property type="entry name" value="Argininosuccinate synthase"/>
    <property type="match status" value="1"/>
</dbReference>
<dbReference type="Gene3D" id="3.90.1260.10">
    <property type="entry name" value="Argininosuccinate synthetase, chain A, domain 2"/>
    <property type="match status" value="1"/>
</dbReference>
<dbReference type="Gene3D" id="3.40.50.620">
    <property type="entry name" value="HUPs"/>
    <property type="match status" value="1"/>
</dbReference>
<dbReference type="Gene3D" id="1.20.5.470">
    <property type="entry name" value="Single helix bin"/>
    <property type="match status" value="1"/>
</dbReference>
<dbReference type="HAMAP" id="MF_00005">
    <property type="entry name" value="Arg_succ_synth_type1"/>
    <property type="match status" value="1"/>
</dbReference>
<dbReference type="InterPro" id="IPR048268">
    <property type="entry name" value="Arginosuc_syn_C"/>
</dbReference>
<dbReference type="InterPro" id="IPR048267">
    <property type="entry name" value="Arginosuc_syn_N"/>
</dbReference>
<dbReference type="InterPro" id="IPR001518">
    <property type="entry name" value="Arginosuc_synth"/>
</dbReference>
<dbReference type="InterPro" id="IPR018223">
    <property type="entry name" value="Arginosuc_synth_CS"/>
</dbReference>
<dbReference type="InterPro" id="IPR023434">
    <property type="entry name" value="Arginosuc_synth_type_1_subfam"/>
</dbReference>
<dbReference type="InterPro" id="IPR024074">
    <property type="entry name" value="AS_cat/multimer_dom_body"/>
</dbReference>
<dbReference type="InterPro" id="IPR014729">
    <property type="entry name" value="Rossmann-like_a/b/a_fold"/>
</dbReference>
<dbReference type="NCBIfam" id="TIGR00032">
    <property type="entry name" value="argG"/>
    <property type="match status" value="1"/>
</dbReference>
<dbReference type="NCBIfam" id="NF001770">
    <property type="entry name" value="PRK00509.1"/>
    <property type="match status" value="1"/>
</dbReference>
<dbReference type="PANTHER" id="PTHR11587">
    <property type="entry name" value="ARGININOSUCCINATE SYNTHASE"/>
    <property type="match status" value="1"/>
</dbReference>
<dbReference type="PANTHER" id="PTHR11587:SF2">
    <property type="entry name" value="ARGININOSUCCINATE SYNTHASE"/>
    <property type="match status" value="1"/>
</dbReference>
<dbReference type="Pfam" id="PF20979">
    <property type="entry name" value="Arginosuc_syn_C"/>
    <property type="match status" value="1"/>
</dbReference>
<dbReference type="Pfam" id="PF00764">
    <property type="entry name" value="Arginosuc_synth"/>
    <property type="match status" value="1"/>
</dbReference>
<dbReference type="SUPFAM" id="SSF52402">
    <property type="entry name" value="Adenine nucleotide alpha hydrolases-like"/>
    <property type="match status" value="1"/>
</dbReference>
<dbReference type="SUPFAM" id="SSF69864">
    <property type="entry name" value="Argininosuccinate synthetase, C-terminal domain"/>
    <property type="match status" value="1"/>
</dbReference>
<dbReference type="PROSITE" id="PS00564">
    <property type="entry name" value="ARGININOSUCCIN_SYN_1"/>
    <property type="match status" value="1"/>
</dbReference>
<dbReference type="PROSITE" id="PS00565">
    <property type="entry name" value="ARGININOSUCCIN_SYN_2"/>
    <property type="match status" value="1"/>
</dbReference>
<sequence length="401" mass="44455">MKEKIVLAYSGGLDTSVAVQWLIDKGYDVVACCLDVGEGKDLDIVYKKALDMGAVECHIIDATKEFSDEYVSYAIKGNLMYENAYPLVSALSRPLIAKKLVEIAEKTNSVGIAHGCTGKGNDQVRFEVAIKALNPSLKAFAPVREWAWSREEEIDYAIKHNIPVSINHDSPYSIDQNLWGRANECGILEDPYAAPPEDAFDLTNALEETPDTADEIILTFDKGIPVQIDGKTYELDDLILTLNALAGKHGIGRIDHVENRLVGIKSREIYEAPAAEVILKAHKALETITLTKDVAHFKPIIEKQFAEQLYNGLWFSPLTDSLKLFIDSTQQYVSGDVRIKLFKGNAIVNGRKSPYTLYDEKLATYTKEDAFNQDAAVGFIDIYGLPTQVNAMLHGGYSNEQ</sequence>
<protein>
    <recommendedName>
        <fullName evidence="1">Argininosuccinate synthase</fullName>
        <ecNumber evidence="1">6.3.4.5</ecNumber>
    </recommendedName>
    <alternativeName>
        <fullName evidence="1">Citrulline--aspartate ligase</fullName>
    </alternativeName>
</protein>
<feature type="chain" id="PRO_0000263976" description="Argininosuccinate synthase">
    <location>
        <begin position="1"/>
        <end position="401"/>
    </location>
</feature>
<feature type="binding site" evidence="1">
    <location>
        <begin position="8"/>
        <end position="16"/>
    </location>
    <ligand>
        <name>ATP</name>
        <dbReference type="ChEBI" id="CHEBI:30616"/>
    </ligand>
</feature>
<feature type="binding site" evidence="1">
    <location>
        <position position="85"/>
    </location>
    <ligand>
        <name>L-citrulline</name>
        <dbReference type="ChEBI" id="CHEBI:57743"/>
    </ligand>
</feature>
<feature type="binding site" evidence="1">
    <location>
        <position position="115"/>
    </location>
    <ligand>
        <name>ATP</name>
        <dbReference type="ChEBI" id="CHEBI:30616"/>
    </ligand>
</feature>
<feature type="binding site" evidence="1">
    <location>
        <position position="117"/>
    </location>
    <ligand>
        <name>L-aspartate</name>
        <dbReference type="ChEBI" id="CHEBI:29991"/>
    </ligand>
</feature>
<feature type="binding site" evidence="1">
    <location>
        <position position="121"/>
    </location>
    <ligand>
        <name>L-aspartate</name>
        <dbReference type="ChEBI" id="CHEBI:29991"/>
    </ligand>
</feature>
<feature type="binding site" evidence="1">
    <location>
        <position position="121"/>
    </location>
    <ligand>
        <name>L-citrulline</name>
        <dbReference type="ChEBI" id="CHEBI:57743"/>
    </ligand>
</feature>
<feature type="binding site" evidence="1">
    <location>
        <position position="122"/>
    </location>
    <ligand>
        <name>L-aspartate</name>
        <dbReference type="ChEBI" id="CHEBI:29991"/>
    </ligand>
</feature>
<feature type="binding site" evidence="1">
    <location>
        <position position="125"/>
    </location>
    <ligand>
        <name>L-citrulline</name>
        <dbReference type="ChEBI" id="CHEBI:57743"/>
    </ligand>
</feature>
<feature type="binding site" evidence="1">
    <location>
        <position position="173"/>
    </location>
    <ligand>
        <name>L-citrulline</name>
        <dbReference type="ChEBI" id="CHEBI:57743"/>
    </ligand>
</feature>
<feature type="binding site" evidence="1">
    <location>
        <position position="258"/>
    </location>
    <ligand>
        <name>L-citrulline</name>
        <dbReference type="ChEBI" id="CHEBI:57743"/>
    </ligand>
</feature>
<feature type="binding site" evidence="1">
    <location>
        <position position="270"/>
    </location>
    <ligand>
        <name>L-citrulline</name>
        <dbReference type="ChEBI" id="CHEBI:57743"/>
    </ligand>
</feature>
<evidence type="ECO:0000255" key="1">
    <source>
        <dbReference type="HAMAP-Rule" id="MF_00005"/>
    </source>
</evidence>
<comment type="catalytic activity">
    <reaction evidence="1">
        <text>L-citrulline + L-aspartate + ATP = 2-(N(omega)-L-arginino)succinate + AMP + diphosphate + H(+)</text>
        <dbReference type="Rhea" id="RHEA:10932"/>
        <dbReference type="ChEBI" id="CHEBI:15378"/>
        <dbReference type="ChEBI" id="CHEBI:29991"/>
        <dbReference type="ChEBI" id="CHEBI:30616"/>
        <dbReference type="ChEBI" id="CHEBI:33019"/>
        <dbReference type="ChEBI" id="CHEBI:57472"/>
        <dbReference type="ChEBI" id="CHEBI:57743"/>
        <dbReference type="ChEBI" id="CHEBI:456215"/>
        <dbReference type="EC" id="6.3.4.5"/>
    </reaction>
</comment>
<comment type="pathway">
    <text evidence="1">Amino-acid biosynthesis; L-arginine biosynthesis; L-arginine from L-ornithine and carbamoyl phosphate: step 2/3.</text>
</comment>
<comment type="subunit">
    <text evidence="1">Homotetramer.</text>
</comment>
<comment type="subcellular location">
    <subcellularLocation>
        <location evidence="1">Cytoplasm</location>
    </subcellularLocation>
</comment>
<comment type="similarity">
    <text evidence="1">Belongs to the argininosuccinate synthase family. Type 1 subfamily.</text>
</comment>
<name>ASSY_STAA8</name>
<gene>
    <name evidence="1" type="primary">argG</name>
    <name type="ordered locus">SAOUHSC_00899</name>
</gene>
<keyword id="KW-0028">Amino-acid biosynthesis</keyword>
<keyword id="KW-0055">Arginine biosynthesis</keyword>
<keyword id="KW-0067">ATP-binding</keyword>
<keyword id="KW-0963">Cytoplasm</keyword>
<keyword id="KW-0436">Ligase</keyword>
<keyword id="KW-0547">Nucleotide-binding</keyword>
<keyword id="KW-1185">Reference proteome</keyword>
<proteinExistence type="inferred from homology"/>
<reference key="1">
    <citation type="book" date="2006" name="Gram positive pathogens, 2nd edition">
        <title>The Staphylococcus aureus NCTC 8325 genome.</title>
        <editorList>
            <person name="Fischetti V."/>
            <person name="Novick R."/>
            <person name="Ferretti J."/>
            <person name="Portnoy D."/>
            <person name="Rood J."/>
        </editorList>
        <authorList>
            <person name="Gillaspy A.F."/>
            <person name="Worrell V."/>
            <person name="Orvis J."/>
            <person name="Roe B.A."/>
            <person name="Dyer D.W."/>
            <person name="Iandolo J.J."/>
        </authorList>
    </citation>
    <scope>NUCLEOTIDE SEQUENCE [LARGE SCALE GENOMIC DNA]</scope>
    <source>
        <strain>NCTC 8325 / PS 47</strain>
    </source>
</reference>